<gene>
    <name evidence="1" type="primary">clpP1</name>
    <name type="ordered locus">PMT_0062</name>
</gene>
<comment type="function">
    <text evidence="1">Cleaves peptides in various proteins in a process that requires ATP hydrolysis. Has a chymotrypsin-like activity. Plays a major role in the degradation of misfolded proteins.</text>
</comment>
<comment type="catalytic activity">
    <reaction evidence="1">
        <text>Hydrolysis of proteins to small peptides in the presence of ATP and magnesium. alpha-casein is the usual test substrate. In the absence of ATP, only oligopeptides shorter than five residues are hydrolyzed (such as succinyl-Leu-Tyr-|-NHMec, and Leu-Tyr-Leu-|-Tyr-Trp, in which cleavage of the -Tyr-|-Leu- and -Tyr-|-Trp bonds also occurs).</text>
        <dbReference type="EC" id="3.4.21.92"/>
    </reaction>
</comment>
<comment type="subunit">
    <text evidence="1">Fourteen ClpP subunits assemble into 2 heptameric rings which stack back to back to give a disk-like structure with a central cavity, resembling the structure of eukaryotic proteasomes.</text>
</comment>
<comment type="subcellular location">
    <subcellularLocation>
        <location evidence="1">Cytoplasm</location>
    </subcellularLocation>
</comment>
<comment type="similarity">
    <text evidence="1">Belongs to the peptidase S14 family.</text>
</comment>
<feature type="chain" id="PRO_0000179620" description="ATP-dependent Clp protease proteolytic subunit 1">
    <location>
        <begin position="1"/>
        <end position="224"/>
    </location>
</feature>
<feature type="active site" description="Nucleophile" evidence="1">
    <location>
        <position position="120"/>
    </location>
</feature>
<feature type="active site" evidence="1">
    <location>
        <position position="145"/>
    </location>
</feature>
<sequence length="224" mass="24231">MIDSYCYHPIHNRWQGIRPVSSPGILPTVVEQSGRGERAFDIYSRLLRERIIFLGTGVDDQVADALVAQMLFLEAEDPEKDIQIYINSPGGSVTAGLAIYDTMQQVAPDVVTICYGLAASMGAFLLCGGTKGKRLALPNARIMIHQPLGGAQGQAVDIEIQAKEILFLKETLNGLLAEHTGQPLNKIAEDTDRDHFLSPAKAVEYGLIDRVVDSLTGGGIVKEG</sequence>
<proteinExistence type="inferred from homology"/>
<organism>
    <name type="scientific">Prochlorococcus marinus (strain MIT 9313)</name>
    <dbReference type="NCBI Taxonomy" id="74547"/>
    <lineage>
        <taxon>Bacteria</taxon>
        <taxon>Bacillati</taxon>
        <taxon>Cyanobacteriota</taxon>
        <taxon>Cyanophyceae</taxon>
        <taxon>Synechococcales</taxon>
        <taxon>Prochlorococcaceae</taxon>
        <taxon>Prochlorococcus</taxon>
    </lineage>
</organism>
<accession>Q7V992</accession>
<evidence type="ECO:0000255" key="1">
    <source>
        <dbReference type="HAMAP-Rule" id="MF_00444"/>
    </source>
</evidence>
<reference key="1">
    <citation type="journal article" date="2003" name="Nature">
        <title>Genome divergence in two Prochlorococcus ecotypes reflects oceanic niche differentiation.</title>
        <authorList>
            <person name="Rocap G."/>
            <person name="Larimer F.W."/>
            <person name="Lamerdin J.E."/>
            <person name="Malfatti S."/>
            <person name="Chain P."/>
            <person name="Ahlgren N.A."/>
            <person name="Arellano A."/>
            <person name="Coleman M."/>
            <person name="Hauser L."/>
            <person name="Hess W.R."/>
            <person name="Johnson Z.I."/>
            <person name="Land M.L."/>
            <person name="Lindell D."/>
            <person name="Post A.F."/>
            <person name="Regala W."/>
            <person name="Shah M."/>
            <person name="Shaw S.L."/>
            <person name="Steglich C."/>
            <person name="Sullivan M.B."/>
            <person name="Ting C.S."/>
            <person name="Tolonen A."/>
            <person name="Webb E.A."/>
            <person name="Zinser E.R."/>
            <person name="Chisholm S.W."/>
        </authorList>
    </citation>
    <scope>NUCLEOTIDE SEQUENCE [LARGE SCALE GENOMIC DNA]</scope>
    <source>
        <strain>MIT 9313</strain>
    </source>
</reference>
<keyword id="KW-0963">Cytoplasm</keyword>
<keyword id="KW-0378">Hydrolase</keyword>
<keyword id="KW-0645">Protease</keyword>
<keyword id="KW-1185">Reference proteome</keyword>
<keyword id="KW-0720">Serine protease</keyword>
<name>CLPP1_PROMM</name>
<dbReference type="EC" id="3.4.21.92" evidence="1"/>
<dbReference type="EMBL" id="BX548175">
    <property type="protein sequence ID" value="CAE20237.1"/>
    <property type="molecule type" value="Genomic_DNA"/>
</dbReference>
<dbReference type="RefSeq" id="WP_011129441.1">
    <property type="nucleotide sequence ID" value="NC_005071.1"/>
</dbReference>
<dbReference type="SMR" id="Q7V992"/>
<dbReference type="MEROPS" id="S14.001"/>
<dbReference type="KEGG" id="pmt:PMT_0062"/>
<dbReference type="eggNOG" id="COG0740">
    <property type="taxonomic scope" value="Bacteria"/>
</dbReference>
<dbReference type="HOGENOM" id="CLU_058707_3_2_3"/>
<dbReference type="OrthoDB" id="571524at2"/>
<dbReference type="Proteomes" id="UP000001423">
    <property type="component" value="Chromosome"/>
</dbReference>
<dbReference type="GO" id="GO:0005737">
    <property type="term" value="C:cytoplasm"/>
    <property type="evidence" value="ECO:0007669"/>
    <property type="project" value="UniProtKB-SubCell"/>
</dbReference>
<dbReference type="GO" id="GO:0009368">
    <property type="term" value="C:endopeptidase Clp complex"/>
    <property type="evidence" value="ECO:0007669"/>
    <property type="project" value="TreeGrafter"/>
</dbReference>
<dbReference type="GO" id="GO:0004176">
    <property type="term" value="F:ATP-dependent peptidase activity"/>
    <property type="evidence" value="ECO:0007669"/>
    <property type="project" value="InterPro"/>
</dbReference>
<dbReference type="GO" id="GO:0051117">
    <property type="term" value="F:ATPase binding"/>
    <property type="evidence" value="ECO:0007669"/>
    <property type="project" value="TreeGrafter"/>
</dbReference>
<dbReference type="GO" id="GO:0004252">
    <property type="term" value="F:serine-type endopeptidase activity"/>
    <property type="evidence" value="ECO:0007669"/>
    <property type="project" value="UniProtKB-UniRule"/>
</dbReference>
<dbReference type="GO" id="GO:0006515">
    <property type="term" value="P:protein quality control for misfolded or incompletely synthesized proteins"/>
    <property type="evidence" value="ECO:0007669"/>
    <property type="project" value="TreeGrafter"/>
</dbReference>
<dbReference type="CDD" id="cd07017">
    <property type="entry name" value="S14_ClpP_2"/>
    <property type="match status" value="1"/>
</dbReference>
<dbReference type="FunFam" id="3.90.226.10:FF:000001">
    <property type="entry name" value="ATP-dependent Clp protease proteolytic subunit"/>
    <property type="match status" value="1"/>
</dbReference>
<dbReference type="Gene3D" id="3.90.226.10">
    <property type="entry name" value="2-enoyl-CoA Hydratase, Chain A, domain 1"/>
    <property type="match status" value="1"/>
</dbReference>
<dbReference type="HAMAP" id="MF_00444">
    <property type="entry name" value="ClpP"/>
    <property type="match status" value="1"/>
</dbReference>
<dbReference type="InterPro" id="IPR001907">
    <property type="entry name" value="ClpP"/>
</dbReference>
<dbReference type="InterPro" id="IPR029045">
    <property type="entry name" value="ClpP/crotonase-like_dom_sf"/>
</dbReference>
<dbReference type="InterPro" id="IPR023562">
    <property type="entry name" value="ClpP/TepA"/>
</dbReference>
<dbReference type="InterPro" id="IPR033135">
    <property type="entry name" value="ClpP_His_AS"/>
</dbReference>
<dbReference type="NCBIfam" id="TIGR00493">
    <property type="entry name" value="clpP"/>
    <property type="match status" value="1"/>
</dbReference>
<dbReference type="NCBIfam" id="NF001368">
    <property type="entry name" value="PRK00277.1"/>
    <property type="match status" value="1"/>
</dbReference>
<dbReference type="NCBIfam" id="NF009205">
    <property type="entry name" value="PRK12553.1"/>
    <property type="match status" value="1"/>
</dbReference>
<dbReference type="PANTHER" id="PTHR10381">
    <property type="entry name" value="ATP-DEPENDENT CLP PROTEASE PROTEOLYTIC SUBUNIT"/>
    <property type="match status" value="1"/>
</dbReference>
<dbReference type="PANTHER" id="PTHR10381:SF70">
    <property type="entry name" value="ATP-DEPENDENT CLP PROTEASE PROTEOLYTIC SUBUNIT"/>
    <property type="match status" value="1"/>
</dbReference>
<dbReference type="Pfam" id="PF00574">
    <property type="entry name" value="CLP_protease"/>
    <property type="match status" value="1"/>
</dbReference>
<dbReference type="PRINTS" id="PR00127">
    <property type="entry name" value="CLPPROTEASEP"/>
</dbReference>
<dbReference type="SUPFAM" id="SSF52096">
    <property type="entry name" value="ClpP/crotonase"/>
    <property type="match status" value="1"/>
</dbReference>
<dbReference type="PROSITE" id="PS00382">
    <property type="entry name" value="CLP_PROTEASE_HIS"/>
    <property type="match status" value="1"/>
</dbReference>
<protein>
    <recommendedName>
        <fullName evidence="1">ATP-dependent Clp protease proteolytic subunit 1</fullName>
        <ecNumber evidence="1">3.4.21.92</ecNumber>
    </recommendedName>
    <alternativeName>
        <fullName evidence="1">Endopeptidase Clp 1</fullName>
    </alternativeName>
</protein>